<accession>Q9CQ73</accession>
<accession>Q3TIY5</accession>
<sequence>MAVPGSLAECGYIRTVLGQQILGHLDSSSLALPSEARLRLAGSSGRGDPAARSQRIQEQVQQTLARRGRSSAVSGNLHRTSSVPEYVYKLHVVENDFVGRQSPVTRDYDMLKAGMTATYGSRWGRAAAQYSSQKSVEERSWRQPLRRLEISPDSSPERAHYGHSEYQYAWRSHVVPGGRLTLPRYARSEILGLRQAGTARRPPGCGSFSDAVFDNGPLKPTMPTHPPGTSHSAGSLLEETTVRVSQARLQSTQSRTARSSWPRSSVRSSLREPGRMLTTAGQAAVGSGDAHGDRSVFADAQLGNADIEMTLERAVNMLDADHVPVSKISAAATFIQHESFQKSEARKRVNQLRGIPKLLQLLKLQNEDVQRAACGALRNLVFEDNDNKLEVAELNGVPRLLQVLKQTRDLETKKQITGLLWNLSSSDKLKHLMITEALLTLTESVIIPFSGWPEGDYPKANGLLDFDIFYNVTGCLRNMSSAGPDGRKMMRRCDGLIDSLVHYVRGTIADYQPDDKATENCVCILHNLSYQLEAELPEKYSQSIYMQNRNIQTNSNKSIGCFGSRSRKLKEQYQDLQMPEERSNPHGIEWLWHSIVIRMYLSLIAKSTRNYTQEASLGALQNLTAGGGPIPTLVARMVVQKENGLQHTRKMLHVGDPSVKKTAVSLLRNLSRNLSLQNEIAKETLPDLVSIIPDTVPSTDLLIETTASACYTLNNLMQNSYQNARDLLNTGGLQKIMTISIGEGYAPNKASKAASVLLYSLWAHTELHHAYKKAQFKKTDFVNSRTAKAYHSLKD</sequence>
<gene>
    <name evidence="14" type="primary">Pkp2</name>
</gene>
<proteinExistence type="evidence at protein level"/>
<comment type="function">
    <text evidence="1 2 5 7 8">A component of desmosome cell-cell junctions which are required for positive regulation of cellular adhesion (PubMed:15479741). Regulates focal adhesion turnover resulting in changes in focal adhesion size, cell adhesion and cell spreading, potentially via transcriptional modulation of beta-integrins (By similarity). Required to maintain gingival epithelial barrier function (By similarity). Important component of the desmosome that is also required for localization of desmosome component proteins such as DSC2, DSG2 and JUP to the desmosome cell-cell junction (By similarity). Required for the formation of desmosome cell junctions in cardiomyocytes, thereby required for the correct formation of the heart, specifically trabeculation and formation of the atria walls (PubMed:15479741). Loss of desmosome cell junctions leads to mis-localization of DSP and DSG2 resulting in disruption of cell-cell adhesion and disordered intermediate filaments (PubMed:15479741). Modulates profibrotic gene expression in cardiomyocytes via regulation of DSP expression and subsequent activation of downstream TGFB1 and MAPK14/p38 MAPK signaling (By similarity). Required for cardiac sodium current propagation and electrical synchrony in cardiac myocytes, via ANK3 stabilization and modulation of SCN5A/Nav1.5 localization to cell-cell junctions (By similarity). Required for mitochondrial function, nuclear envelope integrity and positive regulation of SIRT3 transcription via maintaining DES localization at its nuclear envelope and cell tip anchoring points, and thereby preserving regulation of the transcriptional program (PubMed:35959657). Maintenance of nuclear envelope integrity protects against DNA damage and transcriptional dysregulation of genes, especially those involved in the electron transport chain, thereby preserving mitochondrial function and protecting against superoxide radical anion generation (PubMed:35959657). Binds single-stranded DNA (ssDNA) (By similarity). May regulate the localization of GJA1 to gap junctions in intercalated disks of the heart (PubMed:18662195).</text>
</comment>
<comment type="subunit">
    <text evidence="1 2">Interacts with DSC2 (By similarity). Interacts with JUP (By similarity). Interacts with KRT5/CK5, KRT8/CK8, KRT14/CK14, KRT18/CK18 and VIM (By similarity). Interacts (via N-terminus) with MARK3/C-TAK1 (By similarity). Interacts with DSP (By similarity). Interacts with DSG1, DSG2 and DSG3 (By similarity). Interacts (via N-terminus) with CTNNB1 (By similarity). Interacts with CDH1 (By similarity). Interacts with the RNA polymerase III (Pol III) complex proteins POLR3A/RPC155, POLR3F/RPC39 and POLR3C/RPC82 (By similarity). Interacts with CTNNA3 (By similarity). Interacts (via N-terminus) with SCN5A/Nav1.5 (By similarity). Interacts with ANK3/ANKG and GJA1/CX43 (By similarity).</text>
</comment>
<comment type="subcellular location">
    <subcellularLocation>
        <location evidence="2">Nucleus</location>
    </subcellularLocation>
    <subcellularLocation>
        <location evidence="6 9">Cell junction</location>
        <location evidence="6 9">Desmosome</location>
    </subcellularLocation>
    <subcellularLocation>
        <location evidence="5">Cell junction</location>
    </subcellularLocation>
    <subcellularLocation>
        <location evidence="2">Cytoplasm</location>
    </subcellularLocation>
    <text evidence="6">Colocalizes with CTNNA3 and SCN5A/Nav1.5 at intercalated disks in the heart.</text>
</comment>
<comment type="tissue specificity">
    <text evidence="6 8">Expressed in cardiomyocytes in the heart (at protein level).</text>
</comment>
<comment type="developmental stage">
    <text evidence="5">Expressed in cardiomyocytes of the atrium and ventricle of the heart in embryos at 10.75 and 13.75 dpc.</text>
</comment>
<comment type="disruption phenotype">
    <text evidence="5 8">Knockout mice die during embryogenesis (PubMed:15479741). Embryos show accumulation of blood in the pericardial and peritoneal cavities, and absence in the head, dorsal trunk and yolk sac at 10.75 dpc followed by a significant decrease in viable embryos at 11.5 dpc (PubMed:15479741). Embryonic heart formation is abnormal showing reduced trabeculation in the heart ventricles and thinning of the atria walls (PubMed:15479741). Loss of DSP and DSG2 localization at cell-cell junctions in cardiomyocytes, DSP localizes to granular aggregates in the cytoplasm which are surrounded by disordered swirls of intermediate filaments (PubMed:15479741). Loss of fascia adherens-like and desmosome-like cell junctions at the intercalated disks (PubMed:15479741). Cardiomyocyte conditional knockout mice show an increase in DNA damage response in cardiomyocytes which is worsened in response to exercise (PubMed:35959657). Cardiomyocytes show an increase in circularity and nuclear size with the presence of multiple nuclear envelope invaginations, a decrease in impeded Ca[2+] flux from the nuclear envelop to the center of the nucleus and a loss of gradient in diastolic Ca[2+] between the center and nucleolemmal region of the nucleus (PubMed:35959657). Decrease in expression and activity of SIRT3 and an increase in abundance of DES, however there is a significant increase in the distance between DES and its anchor points at both the nuclear envelop and the cell tip in cardiomyocytes (PubMed:35959657).</text>
</comment>
<comment type="similarity">
    <text evidence="10">Belongs to the beta-catenin family.</text>
</comment>
<name>PKP2_MOUSE</name>
<dbReference type="EMBL" id="AK004650">
    <property type="protein sequence ID" value="BAB23441.1"/>
    <property type="molecule type" value="mRNA"/>
</dbReference>
<dbReference type="EMBL" id="AK005020">
    <property type="protein sequence ID" value="BAB23749.1"/>
    <property type="molecule type" value="mRNA"/>
</dbReference>
<dbReference type="EMBL" id="AK049481">
    <property type="protein sequence ID" value="BAC33771.1"/>
    <property type="molecule type" value="mRNA"/>
</dbReference>
<dbReference type="EMBL" id="AK167660">
    <property type="protein sequence ID" value="BAE39710.1"/>
    <property type="molecule type" value="mRNA"/>
</dbReference>
<dbReference type="EMBL" id="BC138252">
    <property type="protein sequence ID" value="AAI38253.1"/>
    <property type="molecule type" value="mRNA"/>
</dbReference>
<dbReference type="EMBL" id="BC138253">
    <property type="protein sequence ID" value="AAI38254.1"/>
    <property type="molecule type" value="mRNA"/>
</dbReference>
<dbReference type="CCDS" id="CCDS27981.1"/>
<dbReference type="RefSeq" id="NP_080439.1">
    <property type="nucleotide sequence ID" value="NM_026163.2"/>
</dbReference>
<dbReference type="SMR" id="Q9CQ73"/>
<dbReference type="FunCoup" id="Q9CQ73">
    <property type="interactions" value="320"/>
</dbReference>
<dbReference type="IntAct" id="Q9CQ73">
    <property type="interactions" value="2"/>
</dbReference>
<dbReference type="STRING" id="10090.ENSMUSP00000036890"/>
<dbReference type="GlyGen" id="Q9CQ73">
    <property type="glycosylation" value="2 sites, 1 N-linked glycan (1 site), 1 O-linked glycan (1 site)"/>
</dbReference>
<dbReference type="iPTMnet" id="Q9CQ73"/>
<dbReference type="PhosphoSitePlus" id="Q9CQ73"/>
<dbReference type="jPOST" id="Q9CQ73"/>
<dbReference type="PaxDb" id="10090-ENSMUSP00000036890"/>
<dbReference type="ProteomicsDB" id="340934"/>
<dbReference type="Antibodypedia" id="1963">
    <property type="antibodies" value="328 antibodies from 33 providers"/>
</dbReference>
<dbReference type="DNASU" id="67451"/>
<dbReference type="Ensembl" id="ENSMUST00000039408.3">
    <property type="protein sequence ID" value="ENSMUSP00000036890.3"/>
    <property type="gene ID" value="ENSMUSG00000041957.16"/>
</dbReference>
<dbReference type="GeneID" id="67451"/>
<dbReference type="KEGG" id="mmu:67451"/>
<dbReference type="UCSC" id="uc007yid.1">
    <property type="organism name" value="mouse"/>
</dbReference>
<dbReference type="AGR" id="MGI:1914701"/>
<dbReference type="CTD" id="5318"/>
<dbReference type="MGI" id="MGI:1914701">
    <property type="gene designation" value="Pkp2"/>
</dbReference>
<dbReference type="VEuPathDB" id="HostDB:ENSMUSG00000041957"/>
<dbReference type="eggNOG" id="KOG1048">
    <property type="taxonomic scope" value="Eukaryota"/>
</dbReference>
<dbReference type="GeneTree" id="ENSGT00940000158677"/>
<dbReference type="HOGENOM" id="CLU_009111_3_0_1"/>
<dbReference type="InParanoid" id="Q9CQ73"/>
<dbReference type="OMA" id="MNDSNMF"/>
<dbReference type="OrthoDB" id="3245100at2759"/>
<dbReference type="TreeFam" id="TF321877"/>
<dbReference type="Reactome" id="R-MMU-6805567">
    <property type="pathway name" value="Keratinization"/>
</dbReference>
<dbReference type="Reactome" id="R-MMU-6809371">
    <property type="pathway name" value="Formation of the cornified envelope"/>
</dbReference>
<dbReference type="BioGRID-ORCS" id="67451">
    <property type="hits" value="3 hits in 77 CRISPR screens"/>
</dbReference>
<dbReference type="ChiTaRS" id="Pkp2">
    <property type="organism name" value="mouse"/>
</dbReference>
<dbReference type="PRO" id="PR:Q9CQ73"/>
<dbReference type="Proteomes" id="UP000000589">
    <property type="component" value="Chromosome 16"/>
</dbReference>
<dbReference type="RNAct" id="Q9CQ73">
    <property type="molecule type" value="protein"/>
</dbReference>
<dbReference type="Bgee" id="ENSMUSG00000041957">
    <property type="expression patterns" value="Expressed in ileal epithelium and 249 other cell types or tissues"/>
</dbReference>
<dbReference type="GO" id="GO:0005912">
    <property type="term" value="C:adherens junction"/>
    <property type="evidence" value="ECO:0007669"/>
    <property type="project" value="Ensembl"/>
</dbReference>
<dbReference type="GO" id="GO:0051286">
    <property type="term" value="C:cell tip"/>
    <property type="evidence" value="ECO:0007669"/>
    <property type="project" value="GOC"/>
</dbReference>
<dbReference type="GO" id="GO:0005911">
    <property type="term" value="C:cell-cell junction"/>
    <property type="evidence" value="ECO:0000314"/>
    <property type="project" value="MGI"/>
</dbReference>
<dbReference type="GO" id="GO:0005737">
    <property type="term" value="C:cytoplasm"/>
    <property type="evidence" value="ECO:0007669"/>
    <property type="project" value="UniProtKB-SubCell"/>
</dbReference>
<dbReference type="GO" id="GO:0030057">
    <property type="term" value="C:desmosome"/>
    <property type="evidence" value="ECO:0000314"/>
    <property type="project" value="UniProtKB"/>
</dbReference>
<dbReference type="GO" id="GO:0014704">
    <property type="term" value="C:intercalated disc"/>
    <property type="evidence" value="ECO:0000314"/>
    <property type="project" value="MGI"/>
</dbReference>
<dbReference type="GO" id="GO:0005882">
    <property type="term" value="C:intermediate filament"/>
    <property type="evidence" value="ECO:0000314"/>
    <property type="project" value="BHF-UCL"/>
</dbReference>
<dbReference type="GO" id="GO:0005654">
    <property type="term" value="C:nucleoplasm"/>
    <property type="evidence" value="ECO:0007669"/>
    <property type="project" value="Ensembl"/>
</dbReference>
<dbReference type="GO" id="GO:0005634">
    <property type="term" value="C:nucleus"/>
    <property type="evidence" value="ECO:0000250"/>
    <property type="project" value="UniProtKB"/>
</dbReference>
<dbReference type="GO" id="GO:0005886">
    <property type="term" value="C:plasma membrane"/>
    <property type="evidence" value="ECO:0007669"/>
    <property type="project" value="Ensembl"/>
</dbReference>
<dbReference type="GO" id="GO:0045294">
    <property type="term" value="F:alpha-catenin binding"/>
    <property type="evidence" value="ECO:0007669"/>
    <property type="project" value="Ensembl"/>
</dbReference>
<dbReference type="GO" id="GO:0003677">
    <property type="term" value="F:DNA binding"/>
    <property type="evidence" value="ECO:0000250"/>
    <property type="project" value="UniProtKB"/>
</dbReference>
<dbReference type="GO" id="GO:0019215">
    <property type="term" value="F:intermediate filament binding"/>
    <property type="evidence" value="ECO:0007669"/>
    <property type="project" value="Ensembl"/>
</dbReference>
<dbReference type="GO" id="GO:0060090">
    <property type="term" value="F:molecular adaptor activity"/>
    <property type="evidence" value="ECO:0007669"/>
    <property type="project" value="Ensembl"/>
</dbReference>
<dbReference type="GO" id="GO:0005080">
    <property type="term" value="F:protein kinase C binding"/>
    <property type="evidence" value="ECO:0007669"/>
    <property type="project" value="Ensembl"/>
</dbReference>
<dbReference type="GO" id="GO:0034334">
    <property type="term" value="P:adherens junction maintenance"/>
    <property type="evidence" value="ECO:0007669"/>
    <property type="project" value="Ensembl"/>
</dbReference>
<dbReference type="GO" id="GO:0086073">
    <property type="term" value="P:bundle of His cell-Purkinje myocyte adhesion involved in cell communication"/>
    <property type="evidence" value="ECO:0007669"/>
    <property type="project" value="Ensembl"/>
</dbReference>
<dbReference type="GO" id="GO:0098609">
    <property type="term" value="P:cell-cell adhesion"/>
    <property type="evidence" value="ECO:0000315"/>
    <property type="project" value="MGI"/>
</dbReference>
<dbReference type="GO" id="GO:0007267">
    <property type="term" value="P:cell-cell signaling"/>
    <property type="evidence" value="ECO:0007669"/>
    <property type="project" value="Ensembl"/>
</dbReference>
<dbReference type="GO" id="GO:0002159">
    <property type="term" value="P:desmosome assembly"/>
    <property type="evidence" value="ECO:0007669"/>
    <property type="project" value="Ensembl"/>
</dbReference>
<dbReference type="GO" id="GO:0016264">
    <property type="term" value="P:gap junction assembly"/>
    <property type="evidence" value="ECO:0007669"/>
    <property type="project" value="Ensembl"/>
</dbReference>
<dbReference type="GO" id="GO:0007507">
    <property type="term" value="P:heart development"/>
    <property type="evidence" value="ECO:0000315"/>
    <property type="project" value="MGI"/>
</dbReference>
<dbReference type="GO" id="GO:0045110">
    <property type="term" value="P:intermediate filament bundle assembly"/>
    <property type="evidence" value="ECO:0007669"/>
    <property type="project" value="Ensembl"/>
</dbReference>
<dbReference type="GO" id="GO:0055088">
    <property type="term" value="P:lipid homeostasis"/>
    <property type="evidence" value="ECO:0007669"/>
    <property type="project" value="Ensembl"/>
</dbReference>
<dbReference type="GO" id="GO:0048496">
    <property type="term" value="P:maintenance of animal organ identity"/>
    <property type="evidence" value="ECO:0007669"/>
    <property type="project" value="Ensembl"/>
</dbReference>
<dbReference type="GO" id="GO:0099017">
    <property type="term" value="P:maintenance of protein localization at cell tip"/>
    <property type="evidence" value="ECO:0000315"/>
    <property type="project" value="UniProtKB"/>
</dbReference>
<dbReference type="GO" id="GO:0030336">
    <property type="term" value="P:negative regulation of cell migration"/>
    <property type="evidence" value="ECO:0007669"/>
    <property type="project" value="Ensembl"/>
</dbReference>
<dbReference type="GO" id="GO:0008285">
    <property type="term" value="P:negative regulation of cell population proliferation"/>
    <property type="evidence" value="ECO:0007669"/>
    <property type="project" value="Ensembl"/>
</dbReference>
<dbReference type="GO" id="GO:0045785">
    <property type="term" value="P:positive regulation of cell adhesion"/>
    <property type="evidence" value="ECO:0007669"/>
    <property type="project" value="Ensembl"/>
</dbReference>
<dbReference type="GO" id="GO:0072659">
    <property type="term" value="P:protein localization to plasma membrane"/>
    <property type="evidence" value="ECO:0007669"/>
    <property type="project" value="Ensembl"/>
</dbReference>
<dbReference type="GO" id="GO:2000810">
    <property type="term" value="P:regulation of bicellular tight junction assembly"/>
    <property type="evidence" value="ECO:0007669"/>
    <property type="project" value="Ensembl"/>
</dbReference>
<dbReference type="GO" id="GO:0086091">
    <property type="term" value="P:regulation of heart rate by cardiac conduction"/>
    <property type="evidence" value="ECO:0007669"/>
    <property type="project" value="Ensembl"/>
</dbReference>
<dbReference type="GO" id="GO:1900024">
    <property type="term" value="P:regulation of substrate adhesion-dependent cell spreading"/>
    <property type="evidence" value="ECO:0007669"/>
    <property type="project" value="Ensembl"/>
</dbReference>
<dbReference type="GO" id="GO:0098911">
    <property type="term" value="P:regulation of ventricular cardiac muscle cell action potential"/>
    <property type="evidence" value="ECO:0007669"/>
    <property type="project" value="Ensembl"/>
</dbReference>
<dbReference type="GO" id="GO:0086005">
    <property type="term" value="P:ventricular cardiac muscle cell action potential"/>
    <property type="evidence" value="ECO:0007669"/>
    <property type="project" value="Ensembl"/>
</dbReference>
<dbReference type="GO" id="GO:0055010">
    <property type="term" value="P:ventricular cardiac muscle tissue morphogenesis"/>
    <property type="evidence" value="ECO:0007669"/>
    <property type="project" value="Ensembl"/>
</dbReference>
<dbReference type="FunFam" id="1.25.10.10:FF:000159">
    <property type="entry name" value="Plakophilin 2"/>
    <property type="match status" value="1"/>
</dbReference>
<dbReference type="Gene3D" id="1.25.10.10">
    <property type="entry name" value="Leucine-rich Repeat Variant"/>
    <property type="match status" value="1"/>
</dbReference>
<dbReference type="InterPro" id="IPR011989">
    <property type="entry name" value="ARM-like"/>
</dbReference>
<dbReference type="InterPro" id="IPR016024">
    <property type="entry name" value="ARM-type_fold"/>
</dbReference>
<dbReference type="InterPro" id="IPR000225">
    <property type="entry name" value="Armadillo"/>
</dbReference>
<dbReference type="InterPro" id="IPR028435">
    <property type="entry name" value="Plakophilin/d_Catenin"/>
</dbReference>
<dbReference type="PANTHER" id="PTHR10372:SF25">
    <property type="entry name" value="PLAKOPHILIN-2"/>
    <property type="match status" value="1"/>
</dbReference>
<dbReference type="PANTHER" id="PTHR10372">
    <property type="entry name" value="PLAKOPHILLIN-RELATED"/>
    <property type="match status" value="1"/>
</dbReference>
<dbReference type="Pfam" id="PF00514">
    <property type="entry name" value="Arm"/>
    <property type="match status" value="3"/>
</dbReference>
<dbReference type="SMART" id="SM00185">
    <property type="entry name" value="ARM"/>
    <property type="match status" value="5"/>
</dbReference>
<dbReference type="SUPFAM" id="SSF48371">
    <property type="entry name" value="ARM repeat"/>
    <property type="match status" value="1"/>
</dbReference>
<dbReference type="PROSITE" id="PS50176">
    <property type="entry name" value="ARM_REPEAT"/>
    <property type="match status" value="2"/>
</dbReference>
<feature type="chain" id="PRO_0000456831" description="Plakophilin-2">
    <location>
        <begin position="1"/>
        <end position="795"/>
    </location>
</feature>
<feature type="repeat" description="ARM 1" evidence="3">
    <location>
        <begin position="299"/>
        <end position="339"/>
    </location>
</feature>
<feature type="repeat" description="ARM 2" evidence="3">
    <location>
        <begin position="343"/>
        <end position="382"/>
    </location>
</feature>
<feature type="repeat" description="ARM 3" evidence="3">
    <location>
        <begin position="385"/>
        <end position="425"/>
    </location>
</feature>
<feature type="repeat" description="ARM 4" evidence="3">
    <location>
        <begin position="484"/>
        <end position="530"/>
    </location>
</feature>
<feature type="repeat" description="ARM 5" evidence="3">
    <location>
        <begin position="585"/>
        <end position="625"/>
    </location>
</feature>
<feature type="repeat" description="ARM 6" evidence="3">
    <location>
        <begin position="633"/>
        <end position="672"/>
    </location>
</feature>
<feature type="repeat" description="ARM 7" evidence="3">
    <location>
        <begin position="677"/>
        <end position="718"/>
    </location>
</feature>
<feature type="repeat" description="ARM 8" evidence="3">
    <location>
        <begin position="721"/>
        <end position="763"/>
    </location>
</feature>
<feature type="region of interest" description="Required for binding to single-stranded DNA" evidence="2">
    <location>
        <begin position="1"/>
        <end position="318"/>
    </location>
</feature>
<feature type="region of interest" description="Disordered" evidence="4">
    <location>
        <begin position="197"/>
        <end position="233"/>
    </location>
</feature>
<feature type="region of interest" description="Disordered" evidence="4">
    <location>
        <begin position="245"/>
        <end position="274"/>
    </location>
</feature>
<feature type="compositionally biased region" description="Polar residues" evidence="4">
    <location>
        <begin position="245"/>
        <end position="257"/>
    </location>
</feature>
<feature type="compositionally biased region" description="Low complexity" evidence="4">
    <location>
        <begin position="258"/>
        <end position="268"/>
    </location>
</feature>
<feature type="modified residue" description="Phosphoserine" evidence="2">
    <location>
        <position position="44"/>
    </location>
</feature>
<feature type="modified residue" description="Omega-N-methylarginine" evidence="2">
    <location>
        <position position="46"/>
    </location>
</feature>
<feature type="modified residue" description="Phosphoserine" evidence="2">
    <location>
        <position position="82"/>
    </location>
</feature>
<feature type="modified residue" description="Phosphoserine" evidence="2">
    <location>
        <position position="132"/>
    </location>
</feature>
<feature type="modified residue" description="Phosphoserine" evidence="2">
    <location>
        <position position="135"/>
    </location>
</feature>
<feature type="modified residue" description="Phosphoserine" evidence="2">
    <location>
        <position position="151"/>
    </location>
</feature>
<feature type="modified residue" description="Phosphoserine" evidence="2">
    <location>
        <position position="154"/>
    </location>
</feature>
<feature type="modified residue" description="Phosphoserine" evidence="2">
    <location>
        <position position="155"/>
    </location>
</feature>
<feature type="modified residue" description="Phosphoserine" evidence="2">
    <location>
        <position position="172"/>
    </location>
</feature>
<feature type="modified residue" description="Phosphoserine" evidence="2">
    <location>
        <position position="188"/>
    </location>
</feature>
<feature type="modified residue" description="Phosphoserine" evidence="2">
    <location>
        <position position="232"/>
    </location>
</feature>
<feature type="modified residue" description="Phosphoserine" evidence="2">
    <location>
        <position position="265"/>
    </location>
</feature>
<feature type="modified residue" description="Phosphoserine" evidence="2">
    <location>
        <position position="287"/>
    </location>
</feature>
<feature type="sequence conflict" description="In Ref. 1; BAE39710." evidence="10" ref="1">
    <original>D</original>
    <variation>G</variation>
    <location>
        <position position="498"/>
    </location>
</feature>
<reference key="1">
    <citation type="journal article" date="2005" name="Science">
        <title>The transcriptional landscape of the mammalian genome.</title>
        <authorList>
            <person name="Carninci P."/>
            <person name="Kasukawa T."/>
            <person name="Katayama S."/>
            <person name="Gough J."/>
            <person name="Frith M.C."/>
            <person name="Maeda N."/>
            <person name="Oyama R."/>
            <person name="Ravasi T."/>
            <person name="Lenhard B."/>
            <person name="Wells C."/>
            <person name="Kodzius R."/>
            <person name="Shimokawa K."/>
            <person name="Bajic V.B."/>
            <person name="Brenner S.E."/>
            <person name="Batalov S."/>
            <person name="Forrest A.R."/>
            <person name="Zavolan M."/>
            <person name="Davis M.J."/>
            <person name="Wilming L.G."/>
            <person name="Aidinis V."/>
            <person name="Allen J.E."/>
            <person name="Ambesi-Impiombato A."/>
            <person name="Apweiler R."/>
            <person name="Aturaliya R.N."/>
            <person name="Bailey T.L."/>
            <person name="Bansal M."/>
            <person name="Baxter L."/>
            <person name="Beisel K.W."/>
            <person name="Bersano T."/>
            <person name="Bono H."/>
            <person name="Chalk A.M."/>
            <person name="Chiu K.P."/>
            <person name="Choudhary V."/>
            <person name="Christoffels A."/>
            <person name="Clutterbuck D.R."/>
            <person name="Crowe M.L."/>
            <person name="Dalla E."/>
            <person name="Dalrymple B.P."/>
            <person name="de Bono B."/>
            <person name="Della Gatta G."/>
            <person name="di Bernardo D."/>
            <person name="Down T."/>
            <person name="Engstrom P."/>
            <person name="Fagiolini M."/>
            <person name="Faulkner G."/>
            <person name="Fletcher C.F."/>
            <person name="Fukushima T."/>
            <person name="Furuno M."/>
            <person name="Futaki S."/>
            <person name="Gariboldi M."/>
            <person name="Georgii-Hemming P."/>
            <person name="Gingeras T.R."/>
            <person name="Gojobori T."/>
            <person name="Green R.E."/>
            <person name="Gustincich S."/>
            <person name="Harbers M."/>
            <person name="Hayashi Y."/>
            <person name="Hensch T.K."/>
            <person name="Hirokawa N."/>
            <person name="Hill D."/>
            <person name="Huminiecki L."/>
            <person name="Iacono M."/>
            <person name="Ikeo K."/>
            <person name="Iwama A."/>
            <person name="Ishikawa T."/>
            <person name="Jakt M."/>
            <person name="Kanapin A."/>
            <person name="Katoh M."/>
            <person name="Kawasawa Y."/>
            <person name="Kelso J."/>
            <person name="Kitamura H."/>
            <person name="Kitano H."/>
            <person name="Kollias G."/>
            <person name="Krishnan S.P."/>
            <person name="Kruger A."/>
            <person name="Kummerfeld S.K."/>
            <person name="Kurochkin I.V."/>
            <person name="Lareau L.F."/>
            <person name="Lazarevic D."/>
            <person name="Lipovich L."/>
            <person name="Liu J."/>
            <person name="Liuni S."/>
            <person name="McWilliam S."/>
            <person name="Madan Babu M."/>
            <person name="Madera M."/>
            <person name="Marchionni L."/>
            <person name="Matsuda H."/>
            <person name="Matsuzawa S."/>
            <person name="Miki H."/>
            <person name="Mignone F."/>
            <person name="Miyake S."/>
            <person name="Morris K."/>
            <person name="Mottagui-Tabar S."/>
            <person name="Mulder N."/>
            <person name="Nakano N."/>
            <person name="Nakauchi H."/>
            <person name="Ng P."/>
            <person name="Nilsson R."/>
            <person name="Nishiguchi S."/>
            <person name="Nishikawa S."/>
            <person name="Nori F."/>
            <person name="Ohara O."/>
            <person name="Okazaki Y."/>
            <person name="Orlando V."/>
            <person name="Pang K.C."/>
            <person name="Pavan W.J."/>
            <person name="Pavesi G."/>
            <person name="Pesole G."/>
            <person name="Petrovsky N."/>
            <person name="Piazza S."/>
            <person name="Reed J."/>
            <person name="Reid J.F."/>
            <person name="Ring B.Z."/>
            <person name="Ringwald M."/>
            <person name="Rost B."/>
            <person name="Ruan Y."/>
            <person name="Salzberg S.L."/>
            <person name="Sandelin A."/>
            <person name="Schneider C."/>
            <person name="Schoenbach C."/>
            <person name="Sekiguchi K."/>
            <person name="Semple C.A."/>
            <person name="Seno S."/>
            <person name="Sessa L."/>
            <person name="Sheng Y."/>
            <person name="Shibata Y."/>
            <person name="Shimada H."/>
            <person name="Shimada K."/>
            <person name="Silva D."/>
            <person name="Sinclair B."/>
            <person name="Sperling S."/>
            <person name="Stupka E."/>
            <person name="Sugiura K."/>
            <person name="Sultana R."/>
            <person name="Takenaka Y."/>
            <person name="Taki K."/>
            <person name="Tammoja K."/>
            <person name="Tan S.L."/>
            <person name="Tang S."/>
            <person name="Taylor M.S."/>
            <person name="Tegner J."/>
            <person name="Teichmann S.A."/>
            <person name="Ueda H.R."/>
            <person name="van Nimwegen E."/>
            <person name="Verardo R."/>
            <person name="Wei C.L."/>
            <person name="Yagi K."/>
            <person name="Yamanishi H."/>
            <person name="Zabarovsky E."/>
            <person name="Zhu S."/>
            <person name="Zimmer A."/>
            <person name="Hide W."/>
            <person name="Bult C."/>
            <person name="Grimmond S.M."/>
            <person name="Teasdale R.D."/>
            <person name="Liu E.T."/>
            <person name="Brusic V."/>
            <person name="Quackenbush J."/>
            <person name="Wahlestedt C."/>
            <person name="Mattick J.S."/>
            <person name="Hume D.A."/>
            <person name="Kai C."/>
            <person name="Sasaki D."/>
            <person name="Tomaru Y."/>
            <person name="Fukuda S."/>
            <person name="Kanamori-Katayama M."/>
            <person name="Suzuki M."/>
            <person name="Aoki J."/>
            <person name="Arakawa T."/>
            <person name="Iida J."/>
            <person name="Imamura K."/>
            <person name="Itoh M."/>
            <person name="Kato T."/>
            <person name="Kawaji H."/>
            <person name="Kawagashira N."/>
            <person name="Kawashima T."/>
            <person name="Kojima M."/>
            <person name="Kondo S."/>
            <person name="Konno H."/>
            <person name="Nakano K."/>
            <person name="Ninomiya N."/>
            <person name="Nishio T."/>
            <person name="Okada M."/>
            <person name="Plessy C."/>
            <person name="Shibata K."/>
            <person name="Shiraki T."/>
            <person name="Suzuki S."/>
            <person name="Tagami M."/>
            <person name="Waki K."/>
            <person name="Watahiki A."/>
            <person name="Okamura-Oho Y."/>
            <person name="Suzuki H."/>
            <person name="Kawai J."/>
            <person name="Hayashizaki Y."/>
        </authorList>
    </citation>
    <scope>NUCLEOTIDE SEQUENCE [LARGE SCALE MRNA]</scope>
    <source>
        <strain evidence="13">C57BL/6J</strain>
        <tissue evidence="13">Liver</tissue>
        <tissue evidence="12">Lung</tissue>
    </source>
</reference>
<reference evidence="15" key="2">
    <citation type="journal article" date="2009" name="PLoS Biol.">
        <title>Lineage-specific biology revealed by a finished genome assembly of the mouse.</title>
        <authorList>
            <person name="Church D.M."/>
            <person name="Goodstadt L."/>
            <person name="Hillier L.W."/>
            <person name="Zody M.C."/>
            <person name="Goldstein S."/>
            <person name="She X."/>
            <person name="Bult C.J."/>
            <person name="Agarwala R."/>
            <person name="Cherry J.L."/>
            <person name="DiCuccio M."/>
            <person name="Hlavina W."/>
            <person name="Kapustin Y."/>
            <person name="Meric P."/>
            <person name="Maglott D."/>
            <person name="Birtle Z."/>
            <person name="Marques A.C."/>
            <person name="Graves T."/>
            <person name="Zhou S."/>
            <person name="Teague B."/>
            <person name="Potamousis K."/>
            <person name="Churas C."/>
            <person name="Place M."/>
            <person name="Herschleb J."/>
            <person name="Runnheim R."/>
            <person name="Forrest D."/>
            <person name="Amos-Landgraf J."/>
            <person name="Schwartz D.C."/>
            <person name="Cheng Z."/>
            <person name="Lindblad-Toh K."/>
            <person name="Eichler E.E."/>
            <person name="Ponting C.P."/>
        </authorList>
    </citation>
    <scope>NUCLEOTIDE SEQUENCE [LARGE SCALE GENOMIC DNA]</scope>
    <source>
        <strain evidence="15">C57BL/6J</strain>
    </source>
</reference>
<reference evidence="11" key="3">
    <citation type="journal article" date="2004" name="Genome Res.">
        <title>The status, quality, and expansion of the NIH full-length cDNA project: the Mammalian Gene Collection (MGC).</title>
        <authorList>
            <consortium name="The MGC Project Team"/>
        </authorList>
    </citation>
    <scope>NUCLEOTIDE SEQUENCE [LARGE SCALE MRNA]</scope>
    <source>
        <tissue evidence="11">Brain</tissue>
    </source>
</reference>
<reference key="4">
    <citation type="journal article" date="2004" name="J. Cell Biol.">
        <title>Requirement of plakophilin 2 for heart morphogenesis and cardiac junction formation.</title>
        <authorList>
            <person name="Grossmann K.S."/>
            <person name="Grund C."/>
            <person name="Huelsken J."/>
            <person name="Behrend M."/>
            <person name="Erdmann B."/>
            <person name="Franke W.W."/>
            <person name="Birchmeier W."/>
        </authorList>
    </citation>
    <scope>FUNCTION</scope>
    <scope>SUBCELLULAR LOCATION</scope>
    <scope>DEVELOPMENTAL STAGE</scope>
    <scope>DISRUPTION PHENOTYPE</scope>
</reference>
<reference key="5">
    <citation type="journal article" date="2007" name="J. Cell Sci.">
        <title>A unique and specific interaction between alphaT-catenin and plakophilin-2 in the area composita, the mixed-type junctional structure of cardiac intercalated discs.</title>
        <authorList>
            <person name="Goossens S."/>
            <person name="Janssens B."/>
            <person name="Bonne S."/>
            <person name="De Rycke R."/>
            <person name="Braet F."/>
            <person name="van Hengel J."/>
            <person name="van Roy F."/>
        </authorList>
    </citation>
    <scope>SUBCELLULAR LOCATION</scope>
    <scope>TISSUE SPECIFICITY</scope>
</reference>
<reference evidence="16" key="6">
    <citation type="journal article" date="2007" name="Proc. Natl. Acad. Sci. U.S.A.">
        <title>Large-scale phosphorylation analysis of mouse liver.</title>
        <authorList>
            <person name="Villen J."/>
            <person name="Beausoleil S.A."/>
            <person name="Gerber S.A."/>
            <person name="Gygi S.P."/>
        </authorList>
    </citation>
    <scope>IDENTIFICATION BY MASS SPECTROMETRY [LARGE SCALE ANALYSIS]</scope>
</reference>
<reference evidence="17" key="7">
    <citation type="journal article" date="2008" name="J. Proteome Res.">
        <title>Specific phosphopeptide enrichment with immobilized titanium ion affinity chromatography adsorbent for phosphoproteome analysis.</title>
        <authorList>
            <person name="Zhou H."/>
            <person name="Ye M."/>
            <person name="Dong J."/>
            <person name="Han G."/>
            <person name="Jiang X."/>
            <person name="Wu R."/>
            <person name="Zou H."/>
        </authorList>
    </citation>
    <scope>IDENTIFICATION BY MASS SPECTROMETRY [LARGE SCALE ANALYSIS]</scope>
</reference>
<reference evidence="18" key="8">
    <citation type="journal article" date="2009" name="Immunity">
        <title>The phagosomal proteome in interferon-gamma-activated macrophages.</title>
        <authorList>
            <person name="Trost M."/>
            <person name="English L."/>
            <person name="Lemieux S."/>
            <person name="Courcelles M."/>
            <person name="Desjardins M."/>
            <person name="Thibault P."/>
        </authorList>
    </citation>
    <scope>IDENTIFICATION BY MASS SPECTROMETRY [LARGE SCALE ANALYSIS]</scope>
</reference>
<reference key="9">
    <citation type="journal article" date="2009" name="J. Cell. Mol. Med.">
        <title>Abnormal connexin43 in arrhythmogenic right ventricular cardiomyopathy caused by plakophilin-2 mutations.</title>
        <authorList>
            <person name="Fidler L.M."/>
            <person name="Wilson G.J."/>
            <person name="Liu F."/>
            <person name="Cui X."/>
            <person name="Scherer S.W."/>
            <person name="Taylor G.P."/>
            <person name="Hamilton R.M."/>
        </authorList>
    </citation>
    <scope>FUNCTION</scope>
</reference>
<reference evidence="19" key="10">
    <citation type="journal article" date="2010" name="Cell">
        <title>A tissue-specific atlas of mouse protein phosphorylation and expression.</title>
        <authorList>
            <person name="Huttlin E.L."/>
            <person name="Jedrychowski M.P."/>
            <person name="Elias J.E."/>
            <person name="Goswami T."/>
            <person name="Rad R."/>
            <person name="Beausoleil S.A."/>
            <person name="Villen J."/>
            <person name="Haas W."/>
            <person name="Sowa M.E."/>
            <person name="Gygi S.P."/>
        </authorList>
    </citation>
    <scope>IDENTIFICATION BY MASS SPECTROMETRY [LARGE SCALE ANALYSIS]</scope>
</reference>
<reference key="11">
    <citation type="journal article" date="2022" name="Circulation">
        <title>Loss of Nuclear Envelope Integrity and Increased Oxidant Production Cause DNA Damage in Adult Hearts Deficient in PKP2: A Molecular Substrate of ARVC.</title>
        <authorList>
            <person name="Perez-Hernandez M."/>
            <person name="van Opbergen C.J.M."/>
            <person name="Bagwan N."/>
            <person name="Vissing C.R."/>
            <person name="Marron-Linares G.M."/>
            <person name="Zhang M."/>
            <person name="Torres Vega E."/>
            <person name="Sorrentino A."/>
            <person name="Drici L."/>
            <person name="Sulek K."/>
            <person name="Zhai R."/>
            <person name="Hansen F.B."/>
            <person name="Christensen A.H."/>
            <person name="Boesgaard S."/>
            <person name="Gustafsson F."/>
            <person name="Rossing K."/>
            <person name="Small E.M."/>
            <person name="Davies M.J."/>
            <person name="Rothenberg E."/>
            <person name="Sato P.Y."/>
            <person name="Cerrone M."/>
            <person name="Jensen T.H.L."/>
            <person name="Qvortrup K."/>
            <person name="Bundgaard H."/>
            <person name="Delmar M."/>
            <person name="Lundby A."/>
        </authorList>
    </citation>
    <scope>FUNCTION</scope>
    <scope>TISSUE SPECIFICITY</scope>
    <scope>DISRUPTION PHENOTYPE</scope>
</reference>
<reference key="12">
    <citation type="journal article" date="2024" name="Kidney Int.">
        <title>The role of desmoglein-2 in kidney disease.</title>
        <authorList>
            <person name="Xu T."/>
            <person name="Herkens L."/>
            <person name="Jia T."/>
            <person name="Klinkhammer B.M."/>
            <person name="Kant S."/>
            <person name="Krusche C.A."/>
            <person name="Buhl E.M."/>
            <person name="Hayat S."/>
            <person name="Floege J."/>
            <person name="Strnad P."/>
            <person name="Kramann R."/>
            <person name="Djudjaj S."/>
            <person name="Boor P."/>
        </authorList>
    </citation>
    <scope>SUBCELLULAR LOCATION</scope>
</reference>
<protein>
    <recommendedName>
        <fullName evidence="14">Plakophilin-2</fullName>
    </recommendedName>
</protein>
<organism evidence="13">
    <name type="scientific">Mus musculus</name>
    <name type="common">Mouse</name>
    <dbReference type="NCBI Taxonomy" id="10090"/>
    <lineage>
        <taxon>Eukaryota</taxon>
        <taxon>Metazoa</taxon>
        <taxon>Chordata</taxon>
        <taxon>Craniata</taxon>
        <taxon>Vertebrata</taxon>
        <taxon>Euteleostomi</taxon>
        <taxon>Mammalia</taxon>
        <taxon>Eutheria</taxon>
        <taxon>Euarchontoglires</taxon>
        <taxon>Glires</taxon>
        <taxon>Rodentia</taxon>
        <taxon>Myomorpha</taxon>
        <taxon>Muroidea</taxon>
        <taxon>Muridae</taxon>
        <taxon>Murinae</taxon>
        <taxon>Mus</taxon>
        <taxon>Mus</taxon>
    </lineage>
</organism>
<evidence type="ECO:0000250" key="1">
    <source>
        <dbReference type="UniProtKB" id="F1M7L9"/>
    </source>
</evidence>
<evidence type="ECO:0000250" key="2">
    <source>
        <dbReference type="UniProtKB" id="Q99959"/>
    </source>
</evidence>
<evidence type="ECO:0000255" key="3"/>
<evidence type="ECO:0000256" key="4">
    <source>
        <dbReference type="SAM" id="MobiDB-lite"/>
    </source>
</evidence>
<evidence type="ECO:0000269" key="5">
    <source>
    </source>
</evidence>
<evidence type="ECO:0000269" key="6">
    <source>
    </source>
</evidence>
<evidence type="ECO:0000269" key="7">
    <source>
    </source>
</evidence>
<evidence type="ECO:0000269" key="8">
    <source>
    </source>
</evidence>
<evidence type="ECO:0000269" key="9">
    <source>
    </source>
</evidence>
<evidence type="ECO:0000305" key="10"/>
<evidence type="ECO:0000312" key="11">
    <source>
        <dbReference type="EMBL" id="AAI38253.1"/>
    </source>
</evidence>
<evidence type="ECO:0000312" key="12">
    <source>
        <dbReference type="EMBL" id="BAB23441.1"/>
    </source>
</evidence>
<evidence type="ECO:0000312" key="13">
    <source>
        <dbReference type="EMBL" id="BAB23749.1"/>
    </source>
</evidence>
<evidence type="ECO:0000312" key="14">
    <source>
        <dbReference type="MGI" id="MGI:1914701"/>
    </source>
</evidence>
<evidence type="ECO:0000312" key="15">
    <source>
        <dbReference type="Proteomes" id="UP000000589"/>
    </source>
</evidence>
<evidence type="ECO:0007744" key="16">
    <source>
    </source>
</evidence>
<evidence type="ECO:0007744" key="17">
    <source>
    </source>
</evidence>
<evidence type="ECO:0007744" key="18">
    <source>
    </source>
</evidence>
<evidence type="ECO:0007744" key="19">
    <source>
    </source>
</evidence>
<keyword id="KW-0130">Cell adhesion</keyword>
<keyword id="KW-0965">Cell junction</keyword>
<keyword id="KW-0963">Cytoplasm</keyword>
<keyword id="KW-0238">DNA-binding</keyword>
<keyword id="KW-0488">Methylation</keyword>
<keyword id="KW-0539">Nucleus</keyword>
<keyword id="KW-0597">Phosphoprotein</keyword>
<keyword id="KW-1185">Reference proteome</keyword>
<keyword id="KW-0677">Repeat</keyword>